<accession>Q6NWF6</accession>
<accession>Q7ZT78</accession>
<dbReference type="EMBL" id="AY423000">
    <property type="protein sequence ID" value="AAQ97976.1"/>
    <property type="molecule type" value="mRNA"/>
</dbReference>
<dbReference type="EMBL" id="BC067610">
    <property type="protein sequence ID" value="AAH67610.1"/>
    <property type="molecule type" value="mRNA"/>
</dbReference>
<dbReference type="EMBL" id="AJ460000">
    <property type="protein sequence ID" value="CAD31062.1"/>
    <property type="molecule type" value="mRNA"/>
</dbReference>
<dbReference type="RefSeq" id="NP_956374.1">
    <property type="nucleotide sequence ID" value="NM_200080.2"/>
</dbReference>
<dbReference type="SMR" id="Q6NWF6"/>
<dbReference type="FunCoup" id="Q6NWF6">
    <property type="interactions" value="1468"/>
</dbReference>
<dbReference type="IntAct" id="Q6NWF6">
    <property type="interactions" value="1"/>
</dbReference>
<dbReference type="MINT" id="Q6NWF6"/>
<dbReference type="STRING" id="7955.ENSDARP00000075658"/>
<dbReference type="iPTMnet" id="Q6NWF6"/>
<dbReference type="PaxDb" id="7955-ENSDARP00000075658"/>
<dbReference type="Ensembl" id="ENSDART00000081215">
    <property type="protein sequence ID" value="ENSDARP00000075658"/>
    <property type="gene ID" value="ENSDARG00000058358"/>
</dbReference>
<dbReference type="GeneID" id="797433"/>
<dbReference type="KEGG" id="dre:797433"/>
<dbReference type="AGR" id="ZFIN:ZDB-GENE-030411-5"/>
<dbReference type="CTD" id="3856"/>
<dbReference type="ZFIN" id="ZDB-GENE-030411-5">
    <property type="gene designation" value="krt8"/>
</dbReference>
<dbReference type="eggNOG" id="ENOG502QURK">
    <property type="taxonomic scope" value="Eukaryota"/>
</dbReference>
<dbReference type="HOGENOM" id="CLU_012560_5_4_1"/>
<dbReference type="InParanoid" id="Q6NWF6"/>
<dbReference type="OMA" id="XRASLEA"/>
<dbReference type="OrthoDB" id="2441647at2759"/>
<dbReference type="PhylomeDB" id="Q6NWF6"/>
<dbReference type="TreeFam" id="TF317854"/>
<dbReference type="Reactome" id="R-DRE-6798695">
    <property type="pathway name" value="Neutrophil degranulation"/>
</dbReference>
<dbReference type="Reactome" id="R-DRE-6805567">
    <property type="pathway name" value="Keratinization"/>
</dbReference>
<dbReference type="Reactome" id="R-DRE-6809371">
    <property type="pathway name" value="Formation of the cornified envelope"/>
</dbReference>
<dbReference type="PRO" id="PR:Q6NWF6"/>
<dbReference type="Proteomes" id="UP000000437">
    <property type="component" value="Alternate scaffold 23"/>
</dbReference>
<dbReference type="Proteomes" id="UP000000437">
    <property type="component" value="Chromosome 23"/>
</dbReference>
<dbReference type="Bgee" id="ENSDARG00000058358">
    <property type="expression patterns" value="Expressed in gastrula and 26 other cell types or tissues"/>
</dbReference>
<dbReference type="GO" id="GO:0005737">
    <property type="term" value="C:cytoplasm"/>
    <property type="evidence" value="ECO:0000250"/>
    <property type="project" value="UniProtKB"/>
</dbReference>
<dbReference type="GO" id="GO:0045095">
    <property type="term" value="C:keratin filament"/>
    <property type="evidence" value="ECO:0000318"/>
    <property type="project" value="GO_Central"/>
</dbReference>
<dbReference type="GO" id="GO:0016363">
    <property type="term" value="C:nuclear matrix"/>
    <property type="evidence" value="ECO:0007669"/>
    <property type="project" value="UniProtKB-SubCell"/>
</dbReference>
<dbReference type="GO" id="GO:0005654">
    <property type="term" value="C:nucleoplasm"/>
    <property type="evidence" value="ECO:0007669"/>
    <property type="project" value="UniProtKB-SubCell"/>
</dbReference>
<dbReference type="GO" id="GO:0030280">
    <property type="term" value="F:structural constituent of skin epidermis"/>
    <property type="evidence" value="ECO:0000318"/>
    <property type="project" value="GO_Central"/>
</dbReference>
<dbReference type="GO" id="GO:0045109">
    <property type="term" value="P:intermediate filament organization"/>
    <property type="evidence" value="ECO:0000318"/>
    <property type="project" value="GO_Central"/>
</dbReference>
<dbReference type="GO" id="GO:0031424">
    <property type="term" value="P:keratinization"/>
    <property type="evidence" value="ECO:0000318"/>
    <property type="project" value="GO_Central"/>
</dbReference>
<dbReference type="FunFam" id="1.20.5.1160:FF:000001">
    <property type="entry name" value="Keratin type II"/>
    <property type="match status" value="1"/>
</dbReference>
<dbReference type="FunFam" id="1.20.5.170:FF:000004">
    <property type="entry name" value="Keratin, type II cytoskeletal 5"/>
    <property type="match status" value="1"/>
</dbReference>
<dbReference type="FunFam" id="1.20.5.500:FF:000001">
    <property type="entry name" value="Type II keratin 23"/>
    <property type="match status" value="1"/>
</dbReference>
<dbReference type="Gene3D" id="1.20.5.170">
    <property type="match status" value="1"/>
</dbReference>
<dbReference type="Gene3D" id="1.20.5.500">
    <property type="entry name" value="Single helix bin"/>
    <property type="match status" value="1"/>
</dbReference>
<dbReference type="Gene3D" id="1.20.5.1160">
    <property type="entry name" value="Vasodilator-stimulated phosphoprotein"/>
    <property type="match status" value="1"/>
</dbReference>
<dbReference type="InterPro" id="IPR018039">
    <property type="entry name" value="IF_conserved"/>
</dbReference>
<dbReference type="InterPro" id="IPR039008">
    <property type="entry name" value="IF_rod_dom"/>
</dbReference>
<dbReference type="InterPro" id="IPR032444">
    <property type="entry name" value="Keratin_2_head"/>
</dbReference>
<dbReference type="InterPro" id="IPR003054">
    <property type="entry name" value="Keratin_II"/>
</dbReference>
<dbReference type="PANTHER" id="PTHR45616">
    <property type="entry name" value="GATA-TYPE DOMAIN-CONTAINING PROTEIN"/>
    <property type="match status" value="1"/>
</dbReference>
<dbReference type="PANTHER" id="PTHR45616:SF59">
    <property type="entry name" value="KERATIN, TYPE II CYTOSKELETAL 8"/>
    <property type="match status" value="1"/>
</dbReference>
<dbReference type="Pfam" id="PF00038">
    <property type="entry name" value="Filament"/>
    <property type="match status" value="1"/>
</dbReference>
<dbReference type="Pfam" id="PF16208">
    <property type="entry name" value="Keratin_2_head"/>
    <property type="match status" value="1"/>
</dbReference>
<dbReference type="PRINTS" id="PR01276">
    <property type="entry name" value="TYPE2KERATIN"/>
</dbReference>
<dbReference type="SMART" id="SM01391">
    <property type="entry name" value="Filament"/>
    <property type="match status" value="1"/>
</dbReference>
<dbReference type="SUPFAM" id="SSF64593">
    <property type="entry name" value="Intermediate filament protein, coiled coil region"/>
    <property type="match status" value="3"/>
</dbReference>
<dbReference type="PROSITE" id="PS00226">
    <property type="entry name" value="IF_ROD_1"/>
    <property type="match status" value="1"/>
</dbReference>
<dbReference type="PROSITE" id="PS51842">
    <property type="entry name" value="IF_ROD_2"/>
    <property type="match status" value="1"/>
</dbReference>
<gene>
    <name evidence="10" type="primary">krt8</name>
    <name type="synonym">krt2-8</name>
</gene>
<sequence>MSTYSKKTSYTVKSSSSGSIPRNFSSLSYSGPSMSRQSYSARSSYGGVNRGMGAGMGGGSGFISSSSAYGLGMGMGTGMGAGVVAPIQAVTVNKSLLAPLNLEIDPNIQIVRTQEKEQIKTLNNRFASFIDKVRFLEQQNKMLETKWSLLQNQTATRSNIDAMFEAYIANLRRQLDSLGNDKMKLEADLHNMQGLVEDFKNKYEDEINKRTECENEFVLIKKDVDEAYMNKVELEAKLESLTDEINFLRQIFEEEIRELQSQIKDTSVVVEMDNSRNLDMDAIVAEVRAQYEDIANRSRAEAEMWYKSKYEEMQTSANKYGDDLRSTKTEIADLNRMIQRLQSEIDAVKGQRANLENQIAEAEERGEMAVRDAKGRIKDLEDALQRAKQDMARQIREYQDLMNVKLALDIEIATYRKLLEGEEDRLATGIKAINISKQSTSYGGYPMESAGSSYSTYSSGYSSGLSGGYGGGYSGGYSGGYSSGSGYSDTVSQTKKSVVIKMIETKDGRVVSESSEVVQD</sequence>
<reference evidence="11" key="1">
    <citation type="journal article" date="2004" name="Proc. Natl. Acad. Sci. U.S.A.">
        <title>Hematopoietic gene expression profile in zebrafish kidney marrow.</title>
        <authorList>
            <person name="Song H.-D."/>
            <person name="Sun X.-J."/>
            <person name="Deng M."/>
            <person name="Zhang G.-W."/>
            <person name="Zhou Y."/>
            <person name="Wu X.-Y."/>
            <person name="Sheng Y."/>
            <person name="Chen Y."/>
            <person name="Ruan Z."/>
            <person name="Jiang C.-L."/>
            <person name="Fan H.-Y."/>
            <person name="Zon L.I."/>
            <person name="Kanki J.P."/>
            <person name="Liu T.X."/>
            <person name="Look A.T."/>
            <person name="Chen Z."/>
        </authorList>
    </citation>
    <scope>NUCLEOTIDE SEQUENCE [LARGE SCALE MRNA]</scope>
    <source>
        <tissue evidence="11">Kidney marrow</tissue>
    </source>
</reference>
<reference evidence="10" key="2">
    <citation type="submission" date="2004-03" db="EMBL/GenBank/DDBJ databases">
        <authorList>
            <consortium name="NIH - Zebrafish Gene Collection (ZGC) project"/>
        </authorList>
    </citation>
    <scope>NUCLEOTIDE SEQUENCE [LARGE SCALE MRNA]</scope>
    <source>
        <tissue evidence="10">Kidney</tissue>
    </source>
</reference>
<reference evidence="9 12" key="3">
    <citation type="journal article" date="2003" name="Differentiation">
        <title>cDNA sequences of the authentic keratins 8 and 18 in zebrafish.</title>
        <authorList>
            <person name="Schaffeld M."/>
            <person name="Knappe M."/>
            <person name="Hunzinger C."/>
            <person name="Markl J."/>
        </authorList>
    </citation>
    <scope>NUCLEOTIDE SEQUENCE [MRNA] OF 21-519</scope>
    <scope>TISSUE SPECIFICITY</scope>
    <scope>IDENTIFICATION BY MASS SPECTROMETRY</scope>
</reference>
<reference key="4">
    <citation type="journal article" date="2008" name="J. Proteome Res.">
        <title>Online automated in vivo zebrafish phosphoproteomics: from large-scale analysis down to a single embryo.</title>
        <authorList>
            <person name="Lemeer S."/>
            <person name="Pinkse M.W.H."/>
            <person name="Mohammed S."/>
            <person name="van Breukelen B."/>
            <person name="den Hertog J."/>
            <person name="Slijper M."/>
            <person name="Heck A.J.R."/>
        </authorList>
    </citation>
    <scope>PHOSPHORYLATION [LARGE SCALE ANALYSIS] AT SER-28</scope>
    <scope>IDENTIFICATION BY MASS SPECTROMETRY</scope>
    <source>
        <tissue>Embryo</tissue>
    </source>
</reference>
<feature type="chain" id="PRO_0000228676" description="Keratin, type II cytoskeletal 8">
    <location>
        <begin position="1"/>
        <end position="520"/>
    </location>
</feature>
<feature type="domain" description="IF rod" evidence="5">
    <location>
        <begin position="115"/>
        <end position="426"/>
    </location>
</feature>
<feature type="region of interest" description="Disordered" evidence="6">
    <location>
        <begin position="1"/>
        <end position="20"/>
    </location>
</feature>
<feature type="region of interest" description="Head" evidence="4">
    <location>
        <begin position="2"/>
        <end position="114"/>
    </location>
</feature>
<feature type="region of interest" description="Coil 1A" evidence="4">
    <location>
        <begin position="115"/>
        <end position="150"/>
    </location>
</feature>
<feature type="region of interest" description="Linker 1" evidence="4">
    <location>
        <begin position="151"/>
        <end position="166"/>
    </location>
</feature>
<feature type="region of interest" description="Coil 1B" evidence="4">
    <location>
        <begin position="168"/>
        <end position="259"/>
    </location>
</feature>
<feature type="region of interest" description="Linker 12" evidence="4">
    <location>
        <begin position="260"/>
        <end position="283"/>
    </location>
</feature>
<feature type="region of interest" description="Coil 2" evidence="4">
    <location>
        <begin position="284"/>
        <end position="422"/>
    </location>
</feature>
<feature type="region of interest" description="Tail" evidence="4">
    <location>
        <begin position="423"/>
        <end position="520"/>
    </location>
</feature>
<feature type="compositionally biased region" description="Low complexity" evidence="6">
    <location>
        <begin position="1"/>
        <end position="19"/>
    </location>
</feature>
<feature type="site" description="Stutter" evidence="4">
    <location>
        <position position="366"/>
    </location>
</feature>
<feature type="modified residue" description="Phosphoserine" evidence="8">
    <location>
        <position position="28"/>
    </location>
</feature>
<keyword id="KW-0175">Coiled coil</keyword>
<keyword id="KW-0963">Cytoplasm</keyword>
<keyword id="KW-0403">Intermediate filament</keyword>
<keyword id="KW-0416">Keratin</keyword>
<keyword id="KW-0539">Nucleus</keyword>
<keyword id="KW-0597">Phosphoprotein</keyword>
<keyword id="KW-1185">Reference proteome</keyword>
<name>K2C8_DANRE</name>
<evidence type="ECO:0000250" key="1"/>
<evidence type="ECO:0000250" key="2">
    <source>
        <dbReference type="UniProtKB" id="P05787"/>
    </source>
</evidence>
<evidence type="ECO:0000250" key="3">
    <source>
        <dbReference type="UniProtKB" id="Q10758"/>
    </source>
</evidence>
<evidence type="ECO:0000255" key="4"/>
<evidence type="ECO:0000255" key="5">
    <source>
        <dbReference type="PROSITE-ProRule" id="PRU01188"/>
    </source>
</evidence>
<evidence type="ECO:0000256" key="6">
    <source>
        <dbReference type="SAM" id="MobiDB-lite"/>
    </source>
</evidence>
<evidence type="ECO:0000269" key="7">
    <source>
    </source>
</evidence>
<evidence type="ECO:0000269" key="8">
    <source>
    </source>
</evidence>
<evidence type="ECO:0000305" key="9"/>
<evidence type="ECO:0000312" key="10">
    <source>
        <dbReference type="EMBL" id="AAH67610.1"/>
    </source>
</evidence>
<evidence type="ECO:0000312" key="11">
    <source>
        <dbReference type="EMBL" id="AAQ97976.1"/>
    </source>
</evidence>
<evidence type="ECO:0000312" key="12">
    <source>
        <dbReference type="EMBL" id="CAD31062.1"/>
    </source>
</evidence>
<protein>
    <recommendedName>
        <fullName>Keratin, type II cytoskeletal 8</fullName>
    </recommendedName>
    <alternativeName>
        <fullName>Cytokeratin-8</fullName>
        <shortName>CK-8</shortName>
    </alternativeName>
    <alternativeName>
        <fullName>Keratin-8</fullName>
        <shortName>K8</shortName>
    </alternativeName>
</protein>
<comment type="function">
    <text evidence="2">Together with KRT19, helps to link the contractile apparatus to dystrophin at the costameres of striated muscle.</text>
</comment>
<comment type="subunit">
    <text evidence="1">Heterotetramer of two type I and two type II keratins. Keratin-8 associates with keratin-18 (By similarity).</text>
</comment>
<comment type="subcellular location">
    <subcellularLocation>
        <location evidence="3">Cytoplasm</location>
    </subcellularLocation>
    <subcellularLocation>
        <location evidence="3">Nucleus</location>
        <location evidence="3">Nucleoplasm</location>
    </subcellularLocation>
    <subcellularLocation>
        <location evidence="3">Nucleus matrix</location>
    </subcellularLocation>
</comment>
<comment type="tissue specificity">
    <text evidence="7">Expressed in simple epithelia.</text>
</comment>
<comment type="miscellaneous">
    <text>There are two types of cytoskeletal and microfibrillar keratin: I (acidic; 40-55 kDa) and II (neutral to basic; 56-70 kDa).</text>
</comment>
<comment type="similarity">
    <text evidence="5">Belongs to the intermediate filament family.</text>
</comment>
<organism>
    <name type="scientific">Danio rerio</name>
    <name type="common">Zebrafish</name>
    <name type="synonym">Brachydanio rerio</name>
    <dbReference type="NCBI Taxonomy" id="7955"/>
    <lineage>
        <taxon>Eukaryota</taxon>
        <taxon>Metazoa</taxon>
        <taxon>Chordata</taxon>
        <taxon>Craniata</taxon>
        <taxon>Vertebrata</taxon>
        <taxon>Euteleostomi</taxon>
        <taxon>Actinopterygii</taxon>
        <taxon>Neopterygii</taxon>
        <taxon>Teleostei</taxon>
        <taxon>Ostariophysi</taxon>
        <taxon>Cypriniformes</taxon>
        <taxon>Danionidae</taxon>
        <taxon>Danioninae</taxon>
        <taxon>Danio</taxon>
    </lineage>
</organism>
<proteinExistence type="evidence at protein level"/>